<gene>
    <name type="primary">MB</name>
</gene>
<accession>P02203</accession>
<dbReference type="EC" id="1.7.-.-" evidence="1"/>
<dbReference type="EC" id="1.11.1.-" evidence="1"/>
<dbReference type="PIR" id="A02524">
    <property type="entry name" value="MYLZM"/>
</dbReference>
<dbReference type="SMR" id="P02203"/>
<dbReference type="GO" id="GO:0070062">
    <property type="term" value="C:extracellular exosome"/>
    <property type="evidence" value="ECO:0007669"/>
    <property type="project" value="TreeGrafter"/>
</dbReference>
<dbReference type="GO" id="GO:0016528">
    <property type="term" value="C:sarcoplasm"/>
    <property type="evidence" value="ECO:0000250"/>
    <property type="project" value="UniProtKB"/>
</dbReference>
<dbReference type="GO" id="GO:0020037">
    <property type="term" value="F:heme binding"/>
    <property type="evidence" value="ECO:0007669"/>
    <property type="project" value="InterPro"/>
</dbReference>
<dbReference type="GO" id="GO:0046872">
    <property type="term" value="F:metal ion binding"/>
    <property type="evidence" value="ECO:0007669"/>
    <property type="project" value="UniProtKB-KW"/>
</dbReference>
<dbReference type="GO" id="GO:0098809">
    <property type="term" value="F:nitrite reductase activity"/>
    <property type="evidence" value="ECO:0000250"/>
    <property type="project" value="UniProtKB"/>
</dbReference>
<dbReference type="GO" id="GO:0019825">
    <property type="term" value="F:oxygen binding"/>
    <property type="evidence" value="ECO:0007669"/>
    <property type="project" value="InterPro"/>
</dbReference>
<dbReference type="GO" id="GO:0005344">
    <property type="term" value="F:oxygen carrier activity"/>
    <property type="evidence" value="ECO:0000250"/>
    <property type="project" value="UniProtKB"/>
</dbReference>
<dbReference type="GO" id="GO:0004601">
    <property type="term" value="F:peroxidase activity"/>
    <property type="evidence" value="ECO:0000250"/>
    <property type="project" value="UniProtKB"/>
</dbReference>
<dbReference type="GO" id="GO:0019430">
    <property type="term" value="P:removal of superoxide radicals"/>
    <property type="evidence" value="ECO:0000250"/>
    <property type="project" value="UniProtKB"/>
</dbReference>
<dbReference type="CDD" id="cd08926">
    <property type="entry name" value="Mb"/>
    <property type="match status" value="1"/>
</dbReference>
<dbReference type="Gene3D" id="6.10.140.2100">
    <property type="match status" value="1"/>
</dbReference>
<dbReference type="Gene3D" id="6.10.140.2110">
    <property type="match status" value="1"/>
</dbReference>
<dbReference type="InterPro" id="IPR000971">
    <property type="entry name" value="Globin"/>
</dbReference>
<dbReference type="InterPro" id="IPR009050">
    <property type="entry name" value="Globin-like_sf"/>
</dbReference>
<dbReference type="InterPro" id="IPR002335">
    <property type="entry name" value="Myoglobin"/>
</dbReference>
<dbReference type="PANTHER" id="PTHR47132">
    <property type="entry name" value="MYOGLOBIN"/>
    <property type="match status" value="1"/>
</dbReference>
<dbReference type="PANTHER" id="PTHR47132:SF1">
    <property type="entry name" value="MYOGLOBIN"/>
    <property type="match status" value="1"/>
</dbReference>
<dbReference type="Pfam" id="PF00042">
    <property type="entry name" value="Globin"/>
    <property type="match status" value="1"/>
</dbReference>
<dbReference type="PRINTS" id="PR00613">
    <property type="entry name" value="MYOGLOBIN"/>
</dbReference>
<dbReference type="SUPFAM" id="SSF46458">
    <property type="entry name" value="Globin-like"/>
    <property type="match status" value="1"/>
</dbReference>
<dbReference type="PROSITE" id="PS01033">
    <property type="entry name" value="GLOBIN"/>
    <property type="match status" value="1"/>
</dbReference>
<reference key="1">
    <citation type="journal article" date="1981" name="J. Biol. Chem.">
        <title>Amino acid sequence of a myoglobin from lace monitor lizard, Varanus varius, and its evolutionary implications.</title>
        <authorList>
            <person name="Maeda N."/>
            <person name="Fitch W.M."/>
        </authorList>
    </citation>
    <scope>PROTEIN SEQUENCE OF 2-154</scope>
</reference>
<sequence length="154" mass="17566">MGLSDEEWKKVVDIWGKVEPDLPSHGQEVIIRMFQNHPETQDRFAKFKNLKTLDEMKNSEDLKKHGTTVLTALGRILKQKGHHEAEIAPLAQTHANTHKIPIKYLEFICEVIVGVIAEKHSADFGADSQEAMRKALELFRNDMASRYKELGFQG</sequence>
<evidence type="ECO:0000250" key="1">
    <source>
        <dbReference type="UniProtKB" id="P02144"/>
    </source>
</evidence>
<evidence type="ECO:0000250" key="2">
    <source>
        <dbReference type="UniProtKB" id="P02185"/>
    </source>
</evidence>
<evidence type="ECO:0000250" key="3">
    <source>
        <dbReference type="UniProtKB" id="P02189"/>
    </source>
</evidence>
<evidence type="ECO:0000250" key="4">
    <source>
        <dbReference type="UniProtKB" id="P68082"/>
    </source>
</evidence>
<evidence type="ECO:0000255" key="5">
    <source>
        <dbReference type="PROSITE-ProRule" id="PRU00238"/>
    </source>
</evidence>
<evidence type="ECO:0000269" key="6">
    <source>
    </source>
</evidence>
<name>MYG_VARVA</name>
<protein>
    <recommendedName>
        <fullName>Myoglobin</fullName>
    </recommendedName>
    <alternativeName>
        <fullName evidence="1">Nitrite reductase MB</fullName>
        <ecNumber evidence="1">1.7.-.-</ecNumber>
    </alternativeName>
    <alternativeName>
        <fullName evidence="1">Pseudoperoxidase MB</fullName>
        <ecNumber evidence="1">1.11.1.-</ecNumber>
    </alternativeName>
</protein>
<keyword id="KW-0963">Cytoplasm</keyword>
<keyword id="KW-0903">Direct protein sequencing</keyword>
<keyword id="KW-0349">Heme</keyword>
<keyword id="KW-0408">Iron</keyword>
<keyword id="KW-0479">Metal-binding</keyword>
<keyword id="KW-0514">Muscle protein</keyword>
<keyword id="KW-0560">Oxidoreductase</keyword>
<keyword id="KW-0561">Oxygen transport</keyword>
<keyword id="KW-0813">Transport</keyword>
<proteinExistence type="evidence at protein level"/>
<comment type="function">
    <text evidence="1">Monomeric heme protein which primary function is to store oxygen and facilitate its diffusion within muscle tissues. Reversibly binds oxygen through a pentacoordinated heme iron and enables its timely and efficient release as needed during periods of heightened demand. Depending on the oxidative conditions of tissues and cells, and in addition to its ability to bind oxygen, it also has a nitrite reductase activity whereby it regulates the production of bioactive nitric oxide. Under stress conditions, like hypoxia and anoxia, it also protects cells against reactive oxygen species thanks to its pseudoperoxidase activity.</text>
</comment>
<comment type="catalytic activity">
    <reaction evidence="1">
        <text>Fe(III)-heme b-[protein] + nitric oxide + H2O = Fe(II)-heme b-[protein] + nitrite + 2 H(+)</text>
        <dbReference type="Rhea" id="RHEA:77711"/>
        <dbReference type="Rhea" id="RHEA-COMP:18975"/>
        <dbReference type="Rhea" id="RHEA-COMP:18976"/>
        <dbReference type="ChEBI" id="CHEBI:15377"/>
        <dbReference type="ChEBI" id="CHEBI:15378"/>
        <dbReference type="ChEBI" id="CHEBI:16301"/>
        <dbReference type="ChEBI" id="CHEBI:16480"/>
        <dbReference type="ChEBI" id="CHEBI:55376"/>
        <dbReference type="ChEBI" id="CHEBI:60344"/>
    </reaction>
    <physiologicalReaction direction="right-to-left" evidence="1">
        <dbReference type="Rhea" id="RHEA:77713"/>
    </physiologicalReaction>
</comment>
<comment type="catalytic activity">
    <reaction evidence="1">
        <text>H2O2 + AH2 = A + 2 H2O</text>
        <dbReference type="Rhea" id="RHEA:30275"/>
        <dbReference type="ChEBI" id="CHEBI:13193"/>
        <dbReference type="ChEBI" id="CHEBI:15377"/>
        <dbReference type="ChEBI" id="CHEBI:16240"/>
        <dbReference type="ChEBI" id="CHEBI:17499"/>
    </reaction>
</comment>
<comment type="subunit">
    <text evidence="2">Monomeric.</text>
</comment>
<comment type="subcellular location">
    <subcellularLocation>
        <location evidence="1">Cytoplasm</location>
        <location evidence="1">Sarcoplasm</location>
    </subcellularLocation>
</comment>
<comment type="similarity">
    <text evidence="5">Belongs to the globin family.</text>
</comment>
<feature type="initiator methionine" description="Removed" evidence="6">
    <location>
        <position position="1"/>
    </location>
</feature>
<feature type="chain" id="PRO_0000053383" description="Myoglobin">
    <location>
        <begin position="2"/>
        <end position="154"/>
    </location>
</feature>
<feature type="domain" description="Globin" evidence="5">
    <location>
        <begin position="2"/>
        <end position="148"/>
    </location>
</feature>
<feature type="binding site" evidence="4">
    <location>
        <position position="65"/>
    </location>
    <ligand>
        <name>nitrite</name>
        <dbReference type="ChEBI" id="CHEBI:16301"/>
    </ligand>
</feature>
<feature type="binding site" evidence="3 5">
    <location>
        <position position="65"/>
    </location>
    <ligand>
        <name>O2</name>
        <dbReference type="ChEBI" id="CHEBI:15379"/>
    </ligand>
</feature>
<feature type="binding site" description="proximal binding residue" evidence="1">
    <location>
        <position position="94"/>
    </location>
    <ligand>
        <name>heme b</name>
        <dbReference type="ChEBI" id="CHEBI:60344"/>
    </ligand>
    <ligandPart>
        <name>Fe</name>
        <dbReference type="ChEBI" id="CHEBI:18248"/>
    </ligandPart>
</feature>
<organism>
    <name type="scientific">Varanus varius</name>
    <name type="common">Lace monitor lizard</name>
    <name type="synonym">Lacerta varia</name>
    <dbReference type="NCBI Taxonomy" id="8559"/>
    <lineage>
        <taxon>Eukaryota</taxon>
        <taxon>Metazoa</taxon>
        <taxon>Chordata</taxon>
        <taxon>Craniata</taxon>
        <taxon>Vertebrata</taxon>
        <taxon>Euteleostomi</taxon>
        <taxon>Lepidosauria</taxon>
        <taxon>Squamata</taxon>
        <taxon>Bifurcata</taxon>
        <taxon>Unidentata</taxon>
        <taxon>Episquamata</taxon>
        <taxon>Toxicofera</taxon>
        <taxon>Anguimorpha</taxon>
        <taxon>Paleoanguimorpha</taxon>
        <taxon>Varanoidea</taxon>
        <taxon>Varanidae</taxon>
        <taxon>Varanus</taxon>
    </lineage>
</organism>